<proteinExistence type="evidence at protein level"/>
<comment type="subunit">
    <text evidence="1 2">Monomer.</text>
</comment>
<comment type="subcellular location">
    <subcellularLocation>
        <location>Secreted</location>
    </subcellularLocation>
</comment>
<comment type="tissue specificity">
    <text evidence="1 2">Hemolymph.</text>
</comment>
<comment type="mass spectrometry"/>
<comment type="similarity">
    <text evidence="2">Belongs to the UPF0408 family.</text>
</comment>
<organism evidence="3">
    <name type="scientific">Galleria mellonella</name>
    <name type="common">Greater wax moth</name>
    <dbReference type="NCBI Taxonomy" id="7137"/>
    <lineage>
        <taxon>Eukaryota</taxon>
        <taxon>Metazoa</taxon>
        <taxon>Ecdysozoa</taxon>
        <taxon>Arthropoda</taxon>
        <taxon>Hexapoda</taxon>
        <taxon>Insecta</taxon>
        <taxon>Pterygota</taxon>
        <taxon>Neoptera</taxon>
        <taxon>Endopterygota</taxon>
        <taxon>Lepidoptera</taxon>
        <taxon>Glossata</taxon>
        <taxon>Ditrysia</taxon>
        <taxon>Pyraloidea</taxon>
        <taxon>Pyralidae</taxon>
        <taxon>Galleriinae</taxon>
        <taxon>Galleria</taxon>
    </lineage>
</organism>
<dbReference type="EMBL" id="AJ575661">
    <property type="protein sequence ID" value="CAE02611.1"/>
    <property type="molecule type" value="mRNA"/>
</dbReference>
<dbReference type="FunCoup" id="P83632">
    <property type="interactions" value="10"/>
</dbReference>
<dbReference type="Allergome" id="3637">
    <property type="allergen name" value="Gal m 18kD"/>
</dbReference>
<dbReference type="EnsemblMetazoa" id="XM_026895261.2">
    <property type="protein sequence ID" value="XP_026751062.1"/>
    <property type="gene ID" value="LOC113511606"/>
</dbReference>
<dbReference type="InParanoid" id="P83632"/>
<dbReference type="Proteomes" id="UP000504614">
    <property type="component" value="Unplaced"/>
</dbReference>
<dbReference type="GO" id="GO:0005576">
    <property type="term" value="C:extracellular region"/>
    <property type="evidence" value="ECO:0007669"/>
    <property type="project" value="UniProtKB-SubCell"/>
</dbReference>
<dbReference type="InterPro" id="IPR009832">
    <property type="entry name" value="DUF1397"/>
</dbReference>
<dbReference type="PANTHER" id="PTHR20997">
    <property type="entry name" value="EG:BACR42I17.2 PROTEIN-RELATED"/>
    <property type="match status" value="1"/>
</dbReference>
<dbReference type="PANTHER" id="PTHR20997:SF2">
    <property type="entry name" value="EG:BACR42I17.2 PROTEIN-RELATED"/>
    <property type="match status" value="1"/>
</dbReference>
<dbReference type="Pfam" id="PF07165">
    <property type="entry name" value="DUF1397"/>
    <property type="match status" value="1"/>
</dbReference>
<keyword id="KW-0903">Direct protein sequencing</keyword>
<keyword id="KW-1185">Reference proteome</keyword>
<keyword id="KW-0964">Secreted</keyword>
<keyword id="KW-0732">Signal</keyword>
<reference evidence="2 3" key="1">
    <citation type="submission" date="2003-07" db="EMBL/GenBank/DDBJ databases">
        <title>Hemolymph proteins of the greater wax moth, Galleria mellonella.</title>
        <authorList>
            <person name="Weise C."/>
            <person name="Bender O."/>
            <person name="Kopacek P."/>
            <person name="Hucho F."/>
        </authorList>
    </citation>
    <scope>NUCLEOTIDE SEQUENCE [MRNA]</scope>
    <source>
        <tissue>Hemolymph</tissue>
    </source>
</reference>
<reference evidence="2 3" key="2">
    <citation type="submission" date="2003-07" db="UniProtKB">
        <authorList>
            <person name="Weise C."/>
            <person name="Bender O."/>
            <person name="Kopacek P."/>
            <person name="Hucho F."/>
        </authorList>
    </citation>
    <scope>PROTEIN SEQUENCE OF 18-46; 54-120; 148-194 AND 217-236</scope>
    <scope>SUBUNIT</scope>
    <scope>TISSUE SPECIFICITY</scope>
    <scope>MASS SPECTROMETRY</scope>
    <source>
        <tissue evidence="2">Hemolymph</tissue>
    </source>
</reference>
<evidence type="ECO:0000269" key="1">
    <source ref="2"/>
</evidence>
<evidence type="ECO:0000305" key="2"/>
<evidence type="ECO:0000312" key="3">
    <source>
        <dbReference type="EMBL" id="CAE02611.1"/>
    </source>
</evidence>
<name>P27K_GALME</name>
<accession>P83632</accession>
<sequence>MMWKLIIVTILAVGVLCDDIATAVNEQTTQQIRDTLKAQCKKNGAEDKAQDVENAAKNFVECVKGLFDFSTIKKEIEDAKPNGALDEVFGKYCAKSPQLKTCIHTLTTSATPCLEASVREQVGPINNGADQLIDFICYKDGDRIALFIAEGGPECFQEKSEGIRACAEKLKNNVGSVEAAQSLTLVEQCGKYDELTACIIKSLEECSTPTPGNMAESLFRFVRKGSPCNKAAPLKN</sequence>
<protein>
    <recommendedName>
        <fullName>27 kDa hemolymph protein</fullName>
    </recommendedName>
    <alternativeName>
        <fullName>P27K</fullName>
        <shortName>27k</shortName>
    </alternativeName>
</protein>
<feature type="signal peptide" evidence="1">
    <location>
        <begin position="1"/>
        <end position="17"/>
    </location>
</feature>
<feature type="chain" id="PRO_0000021981" description="27 kDa hemolymph protein" evidence="2">
    <location>
        <begin position="18"/>
        <end position="236"/>
    </location>
</feature>